<sequence length="38" mass="4496">MKVRPSVKRMCDSCKIVKRRGRVMVICINPKHKQRQGK</sequence>
<feature type="chain" id="PRO_1000101036" description="Large ribosomal subunit protein bL36">
    <location>
        <begin position="1"/>
        <end position="38"/>
    </location>
</feature>
<comment type="similarity">
    <text evidence="1">Belongs to the bacterial ribosomal protein bL36 family.</text>
</comment>
<reference key="1">
    <citation type="journal article" date="2008" name="DNA Res.">
        <title>Comparative genome analysis of Lactobacillus reuteri and Lactobacillus fermentum reveal a genomic island for reuterin and cobalamin production.</title>
        <authorList>
            <person name="Morita H."/>
            <person name="Toh H."/>
            <person name="Fukuda S."/>
            <person name="Horikawa H."/>
            <person name="Oshima K."/>
            <person name="Suzuki T."/>
            <person name="Murakami M."/>
            <person name="Hisamatsu S."/>
            <person name="Kato Y."/>
            <person name="Takizawa T."/>
            <person name="Fukuoka H."/>
            <person name="Yoshimura T."/>
            <person name="Itoh K."/>
            <person name="O'Sullivan D.J."/>
            <person name="McKay L.L."/>
            <person name="Ohno H."/>
            <person name="Kikuchi J."/>
            <person name="Masaoka T."/>
            <person name="Hattori M."/>
        </authorList>
    </citation>
    <scope>NUCLEOTIDE SEQUENCE [LARGE SCALE GENOMIC DNA]</scope>
    <source>
        <strain>NBRC 3956 / LMG 18251</strain>
    </source>
</reference>
<evidence type="ECO:0000255" key="1">
    <source>
        <dbReference type="HAMAP-Rule" id="MF_00251"/>
    </source>
</evidence>
<evidence type="ECO:0000305" key="2"/>
<protein>
    <recommendedName>
        <fullName evidence="1">Large ribosomal subunit protein bL36</fullName>
    </recommendedName>
    <alternativeName>
        <fullName evidence="2">50S ribosomal protein L36</fullName>
    </alternativeName>
</protein>
<accession>B2GDU6</accession>
<organism>
    <name type="scientific">Limosilactobacillus fermentum (strain NBRC 3956 / LMG 18251)</name>
    <name type="common">Lactobacillus fermentum</name>
    <dbReference type="NCBI Taxonomy" id="334390"/>
    <lineage>
        <taxon>Bacteria</taxon>
        <taxon>Bacillati</taxon>
        <taxon>Bacillota</taxon>
        <taxon>Bacilli</taxon>
        <taxon>Lactobacillales</taxon>
        <taxon>Lactobacillaceae</taxon>
        <taxon>Limosilactobacillus</taxon>
    </lineage>
</organism>
<name>RL36_LIMF3</name>
<proteinExistence type="inferred from homology"/>
<gene>
    <name evidence="1" type="primary">rpmJ</name>
    <name type="ordered locus">LAF_1492</name>
</gene>
<keyword id="KW-1185">Reference proteome</keyword>
<keyword id="KW-0687">Ribonucleoprotein</keyword>
<keyword id="KW-0689">Ribosomal protein</keyword>
<dbReference type="EMBL" id="AP008937">
    <property type="protein sequence ID" value="BAG27828.1"/>
    <property type="molecule type" value="Genomic_DNA"/>
</dbReference>
<dbReference type="RefSeq" id="WP_003681609.1">
    <property type="nucleotide sequence ID" value="NC_010610.1"/>
</dbReference>
<dbReference type="SMR" id="B2GDU6"/>
<dbReference type="GeneID" id="83716131"/>
<dbReference type="KEGG" id="lfe:LAF_1492"/>
<dbReference type="eggNOG" id="COG0257">
    <property type="taxonomic scope" value="Bacteria"/>
</dbReference>
<dbReference type="HOGENOM" id="CLU_135723_6_2_9"/>
<dbReference type="Proteomes" id="UP000001697">
    <property type="component" value="Chromosome"/>
</dbReference>
<dbReference type="GO" id="GO:0005737">
    <property type="term" value="C:cytoplasm"/>
    <property type="evidence" value="ECO:0007669"/>
    <property type="project" value="UniProtKB-ARBA"/>
</dbReference>
<dbReference type="GO" id="GO:1990904">
    <property type="term" value="C:ribonucleoprotein complex"/>
    <property type="evidence" value="ECO:0007669"/>
    <property type="project" value="UniProtKB-KW"/>
</dbReference>
<dbReference type="GO" id="GO:0005840">
    <property type="term" value="C:ribosome"/>
    <property type="evidence" value="ECO:0007669"/>
    <property type="project" value="UniProtKB-KW"/>
</dbReference>
<dbReference type="GO" id="GO:0003735">
    <property type="term" value="F:structural constituent of ribosome"/>
    <property type="evidence" value="ECO:0007669"/>
    <property type="project" value="InterPro"/>
</dbReference>
<dbReference type="GO" id="GO:0006412">
    <property type="term" value="P:translation"/>
    <property type="evidence" value="ECO:0007669"/>
    <property type="project" value="UniProtKB-UniRule"/>
</dbReference>
<dbReference type="HAMAP" id="MF_00251">
    <property type="entry name" value="Ribosomal_bL36"/>
    <property type="match status" value="1"/>
</dbReference>
<dbReference type="InterPro" id="IPR000473">
    <property type="entry name" value="Ribosomal_bL36"/>
</dbReference>
<dbReference type="InterPro" id="IPR035977">
    <property type="entry name" value="Ribosomal_bL36_sp"/>
</dbReference>
<dbReference type="NCBIfam" id="TIGR01022">
    <property type="entry name" value="rpmJ_bact"/>
    <property type="match status" value="1"/>
</dbReference>
<dbReference type="PANTHER" id="PTHR42888">
    <property type="entry name" value="50S RIBOSOMAL PROTEIN L36, CHLOROPLASTIC"/>
    <property type="match status" value="1"/>
</dbReference>
<dbReference type="PANTHER" id="PTHR42888:SF1">
    <property type="entry name" value="LARGE RIBOSOMAL SUBUNIT PROTEIN BL36C"/>
    <property type="match status" value="1"/>
</dbReference>
<dbReference type="Pfam" id="PF00444">
    <property type="entry name" value="Ribosomal_L36"/>
    <property type="match status" value="1"/>
</dbReference>
<dbReference type="SUPFAM" id="SSF57840">
    <property type="entry name" value="Ribosomal protein L36"/>
    <property type="match status" value="1"/>
</dbReference>
<dbReference type="PROSITE" id="PS00828">
    <property type="entry name" value="RIBOSOMAL_L36"/>
    <property type="match status" value="1"/>
</dbReference>